<evidence type="ECO:0000255" key="1">
    <source>
        <dbReference type="HAMAP-Rule" id="MF_00176"/>
    </source>
</evidence>
<proteinExistence type="inferred from homology"/>
<gene>
    <name evidence="1" type="primary">serS</name>
    <name type="ordered locus">Hbut_1249</name>
</gene>
<protein>
    <recommendedName>
        <fullName evidence="1">Serine--tRNA ligase</fullName>
        <ecNumber evidence="1">6.1.1.11</ecNumber>
    </recommendedName>
    <alternativeName>
        <fullName evidence="1">Seryl-tRNA synthetase</fullName>
        <shortName evidence="1">SerRS</shortName>
    </alternativeName>
    <alternativeName>
        <fullName evidence="1">Seryl-tRNA(Ser/Sec) synthetase</fullName>
    </alternativeName>
</protein>
<keyword id="KW-0030">Aminoacyl-tRNA synthetase</keyword>
<keyword id="KW-0067">ATP-binding</keyword>
<keyword id="KW-0963">Cytoplasm</keyword>
<keyword id="KW-0436">Ligase</keyword>
<keyword id="KW-0547">Nucleotide-binding</keyword>
<keyword id="KW-0648">Protein biosynthesis</keyword>
<keyword id="KW-1185">Reference proteome</keyword>
<dbReference type="EC" id="6.1.1.11" evidence="1"/>
<dbReference type="EMBL" id="CP000493">
    <property type="protein sequence ID" value="ABM81081.1"/>
    <property type="molecule type" value="Genomic_DNA"/>
</dbReference>
<dbReference type="RefSeq" id="WP_011822399.1">
    <property type="nucleotide sequence ID" value="NC_008818.1"/>
</dbReference>
<dbReference type="SMR" id="A2BM70"/>
<dbReference type="STRING" id="415426.Hbut_1249"/>
<dbReference type="EnsemblBacteria" id="ABM81081">
    <property type="protein sequence ID" value="ABM81081"/>
    <property type="gene ID" value="Hbut_1249"/>
</dbReference>
<dbReference type="GeneID" id="4782367"/>
<dbReference type="KEGG" id="hbu:Hbut_1249"/>
<dbReference type="eggNOG" id="arCOG00403">
    <property type="taxonomic scope" value="Archaea"/>
</dbReference>
<dbReference type="HOGENOM" id="CLU_023797_0_1_2"/>
<dbReference type="OrthoDB" id="35932at2157"/>
<dbReference type="UniPathway" id="UPA00906">
    <property type="reaction ID" value="UER00895"/>
</dbReference>
<dbReference type="Proteomes" id="UP000002593">
    <property type="component" value="Chromosome"/>
</dbReference>
<dbReference type="GO" id="GO:0005737">
    <property type="term" value="C:cytoplasm"/>
    <property type="evidence" value="ECO:0007669"/>
    <property type="project" value="UniProtKB-SubCell"/>
</dbReference>
<dbReference type="GO" id="GO:0005524">
    <property type="term" value="F:ATP binding"/>
    <property type="evidence" value="ECO:0007669"/>
    <property type="project" value="UniProtKB-UniRule"/>
</dbReference>
<dbReference type="GO" id="GO:0004828">
    <property type="term" value="F:serine-tRNA ligase activity"/>
    <property type="evidence" value="ECO:0007669"/>
    <property type="project" value="UniProtKB-UniRule"/>
</dbReference>
<dbReference type="GO" id="GO:0016260">
    <property type="term" value="P:selenocysteine biosynthetic process"/>
    <property type="evidence" value="ECO:0007669"/>
    <property type="project" value="UniProtKB-UniRule"/>
</dbReference>
<dbReference type="GO" id="GO:0006434">
    <property type="term" value="P:seryl-tRNA aminoacylation"/>
    <property type="evidence" value="ECO:0007669"/>
    <property type="project" value="UniProtKB-UniRule"/>
</dbReference>
<dbReference type="CDD" id="cd00770">
    <property type="entry name" value="SerRS_core"/>
    <property type="match status" value="1"/>
</dbReference>
<dbReference type="FunFam" id="3.30.930.10:FF:000048">
    <property type="entry name" value="Serine--tRNA ligase"/>
    <property type="match status" value="1"/>
</dbReference>
<dbReference type="Gene3D" id="3.30.930.10">
    <property type="entry name" value="Bira Bifunctional Protein, Domain 2"/>
    <property type="match status" value="1"/>
</dbReference>
<dbReference type="Gene3D" id="1.10.287.40">
    <property type="entry name" value="Serine-tRNA synthetase, tRNA binding domain"/>
    <property type="match status" value="1"/>
</dbReference>
<dbReference type="HAMAP" id="MF_00176">
    <property type="entry name" value="Ser_tRNA_synth_type1"/>
    <property type="match status" value="1"/>
</dbReference>
<dbReference type="InterPro" id="IPR002314">
    <property type="entry name" value="aa-tRNA-synt_IIb"/>
</dbReference>
<dbReference type="InterPro" id="IPR006195">
    <property type="entry name" value="aa-tRNA-synth_II"/>
</dbReference>
<dbReference type="InterPro" id="IPR045864">
    <property type="entry name" value="aa-tRNA-synth_II/BPL/LPL"/>
</dbReference>
<dbReference type="InterPro" id="IPR002317">
    <property type="entry name" value="Ser-tRNA-ligase_type_1"/>
</dbReference>
<dbReference type="InterPro" id="IPR015866">
    <property type="entry name" value="Ser-tRNA-synth_1_N"/>
</dbReference>
<dbReference type="InterPro" id="IPR042103">
    <property type="entry name" value="SerRS_1_N_sf"/>
</dbReference>
<dbReference type="InterPro" id="IPR033729">
    <property type="entry name" value="SerRS_core"/>
</dbReference>
<dbReference type="InterPro" id="IPR010978">
    <property type="entry name" value="tRNA-bd_arm"/>
</dbReference>
<dbReference type="NCBIfam" id="TIGR00414">
    <property type="entry name" value="serS"/>
    <property type="match status" value="1"/>
</dbReference>
<dbReference type="PANTHER" id="PTHR11778">
    <property type="entry name" value="SERYL-TRNA SYNTHETASE"/>
    <property type="match status" value="1"/>
</dbReference>
<dbReference type="Pfam" id="PF02403">
    <property type="entry name" value="Seryl_tRNA_N"/>
    <property type="match status" value="1"/>
</dbReference>
<dbReference type="Pfam" id="PF00587">
    <property type="entry name" value="tRNA-synt_2b"/>
    <property type="match status" value="1"/>
</dbReference>
<dbReference type="PIRSF" id="PIRSF001529">
    <property type="entry name" value="Ser-tRNA-synth_IIa"/>
    <property type="match status" value="1"/>
</dbReference>
<dbReference type="PRINTS" id="PR00981">
    <property type="entry name" value="TRNASYNTHSER"/>
</dbReference>
<dbReference type="SUPFAM" id="SSF55681">
    <property type="entry name" value="Class II aaRS and biotin synthetases"/>
    <property type="match status" value="1"/>
</dbReference>
<dbReference type="SUPFAM" id="SSF46589">
    <property type="entry name" value="tRNA-binding arm"/>
    <property type="match status" value="1"/>
</dbReference>
<dbReference type="PROSITE" id="PS50862">
    <property type="entry name" value="AA_TRNA_LIGASE_II"/>
    <property type="match status" value="1"/>
</dbReference>
<organism>
    <name type="scientific">Hyperthermus butylicus (strain DSM 5456 / JCM 9403 / PLM1-5)</name>
    <dbReference type="NCBI Taxonomy" id="415426"/>
    <lineage>
        <taxon>Archaea</taxon>
        <taxon>Thermoproteota</taxon>
        <taxon>Thermoprotei</taxon>
        <taxon>Desulfurococcales</taxon>
        <taxon>Pyrodictiaceae</taxon>
        <taxon>Hyperthermus</taxon>
    </lineage>
</organism>
<feature type="chain" id="PRO_1000019700" description="Serine--tRNA ligase">
    <location>
        <begin position="1"/>
        <end position="460"/>
    </location>
</feature>
<feature type="binding site" evidence="1">
    <location>
        <begin position="255"/>
        <end position="257"/>
    </location>
    <ligand>
        <name>L-serine</name>
        <dbReference type="ChEBI" id="CHEBI:33384"/>
    </ligand>
</feature>
<feature type="binding site" evidence="1">
    <location>
        <begin position="286"/>
        <end position="288"/>
    </location>
    <ligand>
        <name>ATP</name>
        <dbReference type="ChEBI" id="CHEBI:30616"/>
    </ligand>
</feature>
<feature type="binding site" evidence="1">
    <location>
        <position position="302"/>
    </location>
    <ligand>
        <name>ATP</name>
        <dbReference type="ChEBI" id="CHEBI:30616"/>
    </ligand>
</feature>
<feature type="binding site" evidence="1">
    <location>
        <position position="309"/>
    </location>
    <ligand>
        <name>L-serine</name>
        <dbReference type="ChEBI" id="CHEBI:33384"/>
    </ligand>
</feature>
<feature type="binding site" evidence="1">
    <location>
        <begin position="373"/>
        <end position="376"/>
    </location>
    <ligand>
        <name>ATP</name>
        <dbReference type="ChEBI" id="CHEBI:30616"/>
    </ligand>
</feature>
<feature type="binding site" evidence="1">
    <location>
        <position position="409"/>
    </location>
    <ligand>
        <name>L-serine</name>
        <dbReference type="ChEBI" id="CHEBI:33384"/>
    </ligand>
</feature>
<accession>A2BM70</accession>
<comment type="function">
    <text evidence="1">Catalyzes the attachment of serine to tRNA(Ser). Is also able to aminoacylate tRNA(Sec) with serine, to form the misacylated tRNA L-seryl-tRNA(Sec), which will be further converted into selenocysteinyl-tRNA(Sec).</text>
</comment>
<comment type="catalytic activity">
    <reaction evidence="1">
        <text>tRNA(Ser) + L-serine + ATP = L-seryl-tRNA(Ser) + AMP + diphosphate + H(+)</text>
        <dbReference type="Rhea" id="RHEA:12292"/>
        <dbReference type="Rhea" id="RHEA-COMP:9669"/>
        <dbReference type="Rhea" id="RHEA-COMP:9703"/>
        <dbReference type="ChEBI" id="CHEBI:15378"/>
        <dbReference type="ChEBI" id="CHEBI:30616"/>
        <dbReference type="ChEBI" id="CHEBI:33019"/>
        <dbReference type="ChEBI" id="CHEBI:33384"/>
        <dbReference type="ChEBI" id="CHEBI:78442"/>
        <dbReference type="ChEBI" id="CHEBI:78533"/>
        <dbReference type="ChEBI" id="CHEBI:456215"/>
        <dbReference type="EC" id="6.1.1.11"/>
    </reaction>
</comment>
<comment type="catalytic activity">
    <reaction evidence="1">
        <text>tRNA(Sec) + L-serine + ATP = L-seryl-tRNA(Sec) + AMP + diphosphate + H(+)</text>
        <dbReference type="Rhea" id="RHEA:42580"/>
        <dbReference type="Rhea" id="RHEA-COMP:9742"/>
        <dbReference type="Rhea" id="RHEA-COMP:10128"/>
        <dbReference type="ChEBI" id="CHEBI:15378"/>
        <dbReference type="ChEBI" id="CHEBI:30616"/>
        <dbReference type="ChEBI" id="CHEBI:33019"/>
        <dbReference type="ChEBI" id="CHEBI:33384"/>
        <dbReference type="ChEBI" id="CHEBI:78442"/>
        <dbReference type="ChEBI" id="CHEBI:78533"/>
        <dbReference type="ChEBI" id="CHEBI:456215"/>
        <dbReference type="EC" id="6.1.1.11"/>
    </reaction>
</comment>
<comment type="pathway">
    <text evidence="1">Aminoacyl-tRNA biosynthesis; selenocysteinyl-tRNA(Sec) biosynthesis; L-seryl-tRNA(Sec) from L-serine and tRNA(Sec): step 1/1.</text>
</comment>
<comment type="subunit">
    <text evidence="1">Homodimer. The tRNA molecule binds across the dimer.</text>
</comment>
<comment type="subcellular location">
    <subcellularLocation>
        <location evidence="1">Cytoplasm</location>
    </subcellularLocation>
</comment>
<comment type="domain">
    <text evidence="1">Consists of two distinct domains, a catalytic core and a N-terminal extension that is involved in tRNA binding.</text>
</comment>
<comment type="similarity">
    <text evidence="1">Belongs to the class-II aminoacyl-tRNA synthetase family. Type-1 seryl-tRNA synthetase subfamily.</text>
</comment>
<sequence>MTWSILRYLRENPDILKDSMRKRGLDPSVIDEAKRVDEEWRKLKRQVDEIRHRHNVITRQIASARDPEERRKLIEEARRLLAEREELEKKLKALEEERERILLSLPNIVHDSVPVGFSDEENVPIRFWGRPRVYRGHLDAFKAQTERWGFKVDYELIDWKPVGHADMLEYVLKLGNTMKAAEVAGSRFYYLFDDIVWLDFALLLYAIDRLTQKGYRLVLPPYMIRHKILMGVIDMETFKDAIYKVEDEDLYLIATAEHPLAGLYYNEEIMEDELPIKLVGISPCFRKEAGAGNRDLKGIFRVHQFHKVEQFVYAKPEESWDILEELIRNAEELFQGLGLPYRVVNVVSGELGAPAAKKYDLEVWMPAQGKYREMVSASNTTDWQSYRLNIRLVRKKDMKREYVHTLNSTAIASTRTITAILENFQEPDGTVVIPKVLRKYLEIFPKAPKDAIHPVKKVRG</sequence>
<name>SYS_HYPBU</name>
<reference key="1">
    <citation type="journal article" date="2007" name="Archaea">
        <title>The genome of Hyperthermus butylicus: a sulfur-reducing, peptide fermenting, neutrophilic Crenarchaeote growing up to 108 degrees C.</title>
        <authorList>
            <person name="Bruegger K."/>
            <person name="Chen L."/>
            <person name="Stark M."/>
            <person name="Zibat A."/>
            <person name="Redder P."/>
            <person name="Ruepp A."/>
            <person name="Awayez M."/>
            <person name="She Q."/>
            <person name="Garrett R.A."/>
            <person name="Klenk H.-P."/>
        </authorList>
    </citation>
    <scope>NUCLEOTIDE SEQUENCE [LARGE SCALE GENOMIC DNA]</scope>
    <source>
        <strain>DSM 5456 / JCM 9403 / PLM1-5</strain>
    </source>
</reference>